<reference key="1">
    <citation type="journal article" date="2015" name="Proc. Natl. Acad. Sci. U.S.A.">
        <title>Rare allele of a previously unidentified histone H4 acetyltransferase enhances grain weight, yield, and plant biomass in rice.</title>
        <authorList>
            <person name="Song X.J."/>
            <person name="Kuroha T."/>
            <person name="Ayano M."/>
            <person name="Furuta T."/>
            <person name="Nagai K."/>
            <person name="Komeda N."/>
            <person name="Segami S."/>
            <person name="Miura K."/>
            <person name="Ogawa D."/>
            <person name="Kamura T."/>
            <person name="Suzuki T."/>
            <person name="Higashiyama T."/>
            <person name="Yamasaki M."/>
            <person name="Mori H."/>
            <person name="Inukai Y."/>
            <person name="Wu J."/>
            <person name="Kitano H."/>
            <person name="Sakakibara H."/>
            <person name="Jacobsen S.E."/>
            <person name="Ashikari M."/>
        </authorList>
    </citation>
    <scope>NUCLEOTIDE SEQUENCE [GENOMIC DNA / MRNA]</scope>
    <scope>FUNCTION</scope>
    <scope>SUBCELLULAR LOCATION</scope>
    <scope>TISSUE SPECIFICITY</scope>
    <scope>DEVELOPMENTAL STAGE</scope>
    <scope>MUTAGENESIS OF ARG-146</scope>
</reference>
<reference key="2">
    <citation type="journal article" date="2021" name="PLoS Genet.">
        <title>Regulation of the plastochron by three many-noded dwarf genes in barley.</title>
        <authorList>
            <person name="Hibara K.I."/>
            <person name="Miya M."/>
            <person name="Benvenuto S.A."/>
            <person name="Hibara-Matsuo N."/>
            <person name="Mimura M."/>
            <person name="Yoshikawa T."/>
            <person name="Suzuki M."/>
            <person name="Kusaba M."/>
            <person name="Taketa S."/>
            <person name="Itoh J.I."/>
        </authorList>
    </citation>
    <scope>NUCLEOTIDE SEQUENCE [MRNA]</scope>
    <scope>FUNCTION</scope>
</reference>
<reference key="3">
    <citation type="journal article" date="2005" name="Nature">
        <title>The map-based sequence of the rice genome.</title>
        <authorList>
            <consortium name="International rice genome sequencing project (IRGSP)"/>
        </authorList>
    </citation>
    <scope>NUCLEOTIDE SEQUENCE [LARGE SCALE GENOMIC DNA]</scope>
    <source>
        <strain>cv. Nipponbare</strain>
    </source>
</reference>
<reference key="4">
    <citation type="journal article" date="2008" name="Nucleic Acids Res.">
        <title>The rice annotation project database (RAP-DB): 2008 update.</title>
        <authorList>
            <consortium name="The rice annotation project (RAP)"/>
        </authorList>
    </citation>
    <scope>GENOME REANNOTATION</scope>
    <source>
        <strain>cv. Nipponbare</strain>
    </source>
</reference>
<reference key="5">
    <citation type="journal article" date="2013" name="Rice">
        <title>Improvement of the Oryza sativa Nipponbare reference genome using next generation sequence and optical map data.</title>
        <authorList>
            <person name="Kawahara Y."/>
            <person name="de la Bastide M."/>
            <person name="Hamilton J.P."/>
            <person name="Kanamori H."/>
            <person name="McCombie W.R."/>
            <person name="Ouyang S."/>
            <person name="Schwartz D.C."/>
            <person name="Tanaka T."/>
            <person name="Wu J."/>
            <person name="Zhou S."/>
            <person name="Childs K.L."/>
            <person name="Davidson R.M."/>
            <person name="Lin H."/>
            <person name="Quesada-Ocampo L."/>
            <person name="Vaillancourt B."/>
            <person name="Sakai H."/>
            <person name="Lee S.S."/>
            <person name="Kim J."/>
            <person name="Numa H."/>
            <person name="Itoh T."/>
            <person name="Buell C.R."/>
            <person name="Matsumoto T."/>
        </authorList>
    </citation>
    <scope>GENOME REANNOTATION</scope>
    <source>
        <strain>cv. Nipponbare</strain>
    </source>
</reference>
<reference key="6">
    <citation type="journal article" date="2021" name="Plant Cell">
        <title>The ubiquitin-interacting motif-type ubiquitin receptor HDR3 interacts with and stabilizes the histone acetyltransferase GW6a to control the grain size in rice.</title>
        <authorList>
            <person name="Gao Q."/>
            <person name="Zhang N."/>
            <person name="Wang W.Q."/>
            <person name="Shen S.Y."/>
            <person name="Bai C."/>
            <person name="Song X.J."/>
        </authorList>
    </citation>
    <scope>FUNCTION</scope>
    <scope>INTERACTION WITH HDR3</scope>
    <scope>UBIQUITINATION AT LYS-63</scope>
</reference>
<gene>
    <name evidence="6" type="primary">GW6A</name>
    <name evidence="7" type="synonym">GNAT1</name>
    <name evidence="6" type="synonym">HAT1</name>
    <name evidence="10" type="ordered locus">Os06g0650300</name>
    <name evidence="8" type="ordered locus">LOC_Os06g44100</name>
    <name evidence="9" type="ORF">P0453H04.20</name>
</gene>
<feature type="chain" id="PRO_0000454922" description="Acetyl transferase GW6a">
    <location>
        <begin position="1"/>
        <end position="419"/>
    </location>
</feature>
<feature type="domain" description="N-acetyltransferase" evidence="1">
    <location>
        <begin position="12"/>
        <end position="210"/>
    </location>
</feature>
<feature type="region of interest" description="Disordered" evidence="2">
    <location>
        <begin position="44"/>
        <end position="68"/>
    </location>
</feature>
<feature type="compositionally biased region" description="Basic residues" evidence="2">
    <location>
        <begin position="58"/>
        <end position="68"/>
    </location>
</feature>
<feature type="mutagenesis site" description="Abolishes histone acetyltransferase activity in vitro." evidence="3">
    <original>R</original>
    <variation>W</variation>
    <location>
        <position position="146"/>
    </location>
</feature>
<proteinExistence type="evidence at protein level"/>
<comment type="function">
    <text evidence="3 4 5">Possesses intrinsic histone acetyltransferase activity and acts as a positive regulator of grain weight, hull size, yield, and plant biomass (PubMed:25535376, PubMed:34323980). Regulates postitively grain weight and yield by enlarging spikelet hulls via increasing cell number and accelerating grain filling (PubMed:25535376). In vitro, catalyzes the acetylation of histone H4 at Lys-6 (H4K5ac), Lys-13 (H4K12ac) and Lys-17 (H4K16ac) (PubMed:25535376). Involved in the regulation of plastochron (the time interval between leaf initiation event) (PubMed:33970916).</text>
</comment>
<comment type="subunit">
    <text evidence="5">Interacts (via C-terminus) with HDR3 (via N-terminus).</text>
</comment>
<comment type="subcellular location">
    <subcellularLocation>
        <location evidence="3">Nucleus</location>
    </subcellularLocation>
</comment>
<comment type="tissue specificity">
    <text evidence="3">Expressed in roots, leaf blades, leaf sheaths, shoot apical meristem and young panicles.</text>
</comment>
<comment type="developmental stage">
    <text evidence="3">Expressed at the basal part of the abaxial side of leaves in the vegetative phase (PubMed:25535376). In the reproductive phase, expressed in the bracts of initiating branches (PubMed:25535376).</text>
</comment>
<comment type="PTM">
    <text evidence="5">Ubiquitinated at Lys-63 by HDR3 (PubMed:34323980). Polyubiquitination of GW6A delays its degradation by the 26S proteasome and enhances GW6A histone acetyltransferase activity (PubMed:34323980).</text>
</comment>
<comment type="miscellaneous">
    <text evidence="3">Over-expression of GWA6A enhances grain weight and yield by enlarging spikelet hulls via increasing cell number and accelerating grain filling, and increases global acetylation levels of histone H4.</text>
</comment>
<comment type="similarity">
    <text evidence="8">Belongs to the acetyltransferase family.</text>
</comment>
<accession>Q67UR2</accession>
<accession>A0A0A8JXA3</accession>
<keyword id="KW-0012">Acyltransferase</keyword>
<keyword id="KW-0539">Nucleus</keyword>
<keyword id="KW-1185">Reference proteome</keyword>
<keyword id="KW-0808">Transferase</keyword>
<keyword id="KW-0832">Ubl conjugation</keyword>
<evidence type="ECO:0000255" key="1">
    <source>
        <dbReference type="PROSITE-ProRule" id="PRU00532"/>
    </source>
</evidence>
<evidence type="ECO:0000256" key="2">
    <source>
        <dbReference type="SAM" id="MobiDB-lite"/>
    </source>
</evidence>
<evidence type="ECO:0000269" key="3">
    <source>
    </source>
</evidence>
<evidence type="ECO:0000269" key="4">
    <source>
    </source>
</evidence>
<evidence type="ECO:0000269" key="5">
    <source>
    </source>
</evidence>
<evidence type="ECO:0000303" key="6">
    <source>
    </source>
</evidence>
<evidence type="ECO:0000303" key="7">
    <source>
    </source>
</evidence>
<evidence type="ECO:0000305" key="8"/>
<evidence type="ECO:0000312" key="9">
    <source>
        <dbReference type="EMBL" id="BAD38107.1"/>
    </source>
</evidence>
<evidence type="ECO:0000312" key="10">
    <source>
        <dbReference type="EMBL" id="BAS98897.1"/>
    </source>
</evidence>
<organism>
    <name type="scientific">Oryza sativa subsp. japonica</name>
    <name type="common">Rice</name>
    <dbReference type="NCBI Taxonomy" id="39947"/>
    <lineage>
        <taxon>Eukaryota</taxon>
        <taxon>Viridiplantae</taxon>
        <taxon>Streptophyta</taxon>
        <taxon>Embryophyta</taxon>
        <taxon>Tracheophyta</taxon>
        <taxon>Spermatophyta</taxon>
        <taxon>Magnoliopsida</taxon>
        <taxon>Liliopsida</taxon>
        <taxon>Poales</taxon>
        <taxon>Poaceae</taxon>
        <taxon>BOP clade</taxon>
        <taxon>Oryzoideae</taxon>
        <taxon>Oryzeae</taxon>
        <taxon>Oryzinae</taxon>
        <taxon>Oryza</taxon>
        <taxon>Oryza sativa</taxon>
    </lineage>
</organism>
<dbReference type="EC" id="2.3.1.-" evidence="3"/>
<dbReference type="EMBL" id="LC003015">
    <property type="protein sequence ID" value="BAQ15250.1"/>
    <property type="molecule type" value="mRNA"/>
</dbReference>
<dbReference type="EMBL" id="LC003016">
    <property type="protein sequence ID" value="BAQ15251.1"/>
    <property type="molecule type" value="Genomic_DNA"/>
</dbReference>
<dbReference type="EMBL" id="LC593242">
    <property type="protein sequence ID" value="BCN13394.1"/>
    <property type="molecule type" value="mRNA"/>
</dbReference>
<dbReference type="EMBL" id="AP005453">
    <property type="protein sequence ID" value="BAD38107.1"/>
    <property type="molecule type" value="Genomic_DNA"/>
</dbReference>
<dbReference type="EMBL" id="AP014962">
    <property type="protein sequence ID" value="BAS98897.1"/>
    <property type="molecule type" value="Genomic_DNA"/>
</dbReference>
<dbReference type="FunCoup" id="Q67UR2">
    <property type="interactions" value="8"/>
</dbReference>
<dbReference type="PaxDb" id="39947-Q67UR2"/>
<dbReference type="EnsemblPlants" id="Os06t0650300-01">
    <property type="protein sequence ID" value="Os06t0650300-01"/>
    <property type="gene ID" value="Os06g0650300"/>
</dbReference>
<dbReference type="GeneID" id="107275998"/>
<dbReference type="Gramene" id="Os06t0650300-01">
    <property type="protein sequence ID" value="Os06t0650300-01"/>
    <property type="gene ID" value="Os06g0650300"/>
</dbReference>
<dbReference type="KEGG" id="osa:107275998"/>
<dbReference type="eggNOG" id="ENOG502RFA7">
    <property type="taxonomic scope" value="Eukaryota"/>
</dbReference>
<dbReference type="HOGENOM" id="CLU_057213_0_0_1"/>
<dbReference type="InParanoid" id="Q67UR2"/>
<dbReference type="OrthoDB" id="41532at2759"/>
<dbReference type="Proteomes" id="UP000000763">
    <property type="component" value="Chromosome 6"/>
</dbReference>
<dbReference type="Proteomes" id="UP000059680">
    <property type="component" value="Chromosome 6"/>
</dbReference>
<dbReference type="GO" id="GO:0005634">
    <property type="term" value="C:nucleus"/>
    <property type="evidence" value="ECO:0007669"/>
    <property type="project" value="UniProtKB-SubCell"/>
</dbReference>
<dbReference type="GO" id="GO:0016747">
    <property type="term" value="F:acyltransferase activity, transferring groups other than amino-acyl groups"/>
    <property type="evidence" value="ECO:0000318"/>
    <property type="project" value="GO_Central"/>
</dbReference>
<dbReference type="CDD" id="cd04301">
    <property type="entry name" value="NAT_SF"/>
    <property type="match status" value="1"/>
</dbReference>
<dbReference type="FunFam" id="3.40.630.30:FF:000161">
    <property type="entry name" value="Acetyl transferase"/>
    <property type="match status" value="1"/>
</dbReference>
<dbReference type="Gene3D" id="3.40.630.30">
    <property type="match status" value="1"/>
</dbReference>
<dbReference type="InterPro" id="IPR016181">
    <property type="entry name" value="Acyl_CoA_acyltransferase"/>
</dbReference>
<dbReference type="InterPro" id="IPR000182">
    <property type="entry name" value="GNAT_dom"/>
</dbReference>
<dbReference type="InterPro" id="IPR052810">
    <property type="entry name" value="Plant_NAT"/>
</dbReference>
<dbReference type="PANTHER" id="PTHR47370">
    <property type="entry name" value="ACYL-COA N-ACYLTRANSFERASES (NAT) SUPERFAMILY PROTEIN"/>
    <property type="match status" value="1"/>
</dbReference>
<dbReference type="PANTHER" id="PTHR47370:SF6">
    <property type="entry name" value="N-ACETYLTRANSFERASE HLS1-RELATED"/>
    <property type="match status" value="1"/>
</dbReference>
<dbReference type="Pfam" id="PF00583">
    <property type="entry name" value="Acetyltransf_1"/>
    <property type="match status" value="1"/>
</dbReference>
<dbReference type="SUPFAM" id="SSF55729">
    <property type="entry name" value="Acyl-CoA N-acyltransferases (Nat)"/>
    <property type="match status" value="1"/>
</dbReference>
<dbReference type="PROSITE" id="PS51186">
    <property type="entry name" value="GNAT"/>
    <property type="match status" value="1"/>
</dbReference>
<sequence length="419" mass="45696">MVETTTMMKVLVRVREFDVEKDLPAVEELERRCQVGLSGDMAAVHDHADDGDGAAAKEKKKTKTKTKKKKASMSLCVEQIGDPLARVRHAPEHVMLVAEYGEEEEKKKVVGVIKACVKTVSRGGKQEKPFVKVANLLGLRVSPSHRRLGIGTALVRRAEEWCVARGAEHATMATTESNAASLALFTGRFGYAPFRRPEFIGHPVHAHRLPVARGHRVFQLPPEVAAAAYARLLPPQDAEFLPADMPALLAHKLTLGTFVAVAADGASFAVLSVWDSTRSLSLRVSGAPALLRASLAALRALDRGAPWLHLPSIPDIFRPFGAYLLYGLRMSGPDGPALLRSLCHHAHNVARKNPACAVVAADISPDDPAAAAVPRWRRFCCDEDVWCIKNLNPDEHDADDWAAPPPPPGRHLFVDPREF</sequence>
<name>GW6A_ORYSJ</name>
<protein>
    <recommendedName>
        <fullName evidence="8">Acetyl transferase GW6a</fullName>
        <ecNumber evidence="3">2.3.1.-</ecNumber>
    </recommendedName>
    <alternativeName>
        <fullName evidence="6">GNAT-like histone acetyltransferase 1</fullName>
        <shortName evidence="6">OsglHAT1</shortName>
    </alternativeName>
    <alternativeName>
        <fullName evidence="8">Histone H4 acetyltransferase</fullName>
    </alternativeName>
    <alternativeName>
        <fullName evidence="6">Protein GRAIN WEIGHT ON CHROMOSOME 6</fullName>
    </alternativeName>
</protein>